<comment type="function">
    <text evidence="2">Catalyzes the formation of N(7)-methylguanine at position 46 (m7G46) in tRNA.</text>
</comment>
<comment type="catalytic activity">
    <reaction evidence="2">
        <text>guanosine(46) in tRNA + S-adenosyl-L-methionine = N(7)-methylguanosine(46) in tRNA + S-adenosyl-L-homocysteine</text>
        <dbReference type="Rhea" id="RHEA:42708"/>
        <dbReference type="Rhea" id="RHEA-COMP:10188"/>
        <dbReference type="Rhea" id="RHEA-COMP:10189"/>
        <dbReference type="ChEBI" id="CHEBI:57856"/>
        <dbReference type="ChEBI" id="CHEBI:59789"/>
        <dbReference type="ChEBI" id="CHEBI:74269"/>
        <dbReference type="ChEBI" id="CHEBI:74480"/>
        <dbReference type="EC" id="2.1.1.33"/>
    </reaction>
</comment>
<comment type="pathway">
    <text evidence="2">tRNA modification; N(7)-methylguanine-tRNA biosynthesis.</text>
</comment>
<comment type="similarity">
    <text evidence="2">Belongs to the class I-like SAM-binding methyltransferase superfamily. TrmB family.</text>
</comment>
<reference key="1">
    <citation type="submission" date="2007-05" db="EMBL/GenBank/DDBJ databases">
        <title>Complete sequence of Pseudomonas putida F1.</title>
        <authorList>
            <consortium name="US DOE Joint Genome Institute"/>
            <person name="Copeland A."/>
            <person name="Lucas S."/>
            <person name="Lapidus A."/>
            <person name="Barry K."/>
            <person name="Detter J.C."/>
            <person name="Glavina del Rio T."/>
            <person name="Hammon N."/>
            <person name="Israni S."/>
            <person name="Dalin E."/>
            <person name="Tice H."/>
            <person name="Pitluck S."/>
            <person name="Chain P."/>
            <person name="Malfatti S."/>
            <person name="Shin M."/>
            <person name="Vergez L."/>
            <person name="Schmutz J."/>
            <person name="Larimer F."/>
            <person name="Land M."/>
            <person name="Hauser L."/>
            <person name="Kyrpides N."/>
            <person name="Lykidis A."/>
            <person name="Parales R."/>
            <person name="Richardson P."/>
        </authorList>
    </citation>
    <scope>NUCLEOTIDE SEQUENCE [LARGE SCALE GENOMIC DNA]</scope>
    <source>
        <strain>ATCC 700007 / DSM 6899 / JCM 31910 / BCRC 17059 / LMG 24140 / F1</strain>
    </source>
</reference>
<protein>
    <recommendedName>
        <fullName evidence="2">tRNA (guanine-N(7)-)-methyltransferase</fullName>
        <ecNumber evidence="2">2.1.1.33</ecNumber>
    </recommendedName>
    <alternativeName>
        <fullName evidence="2">tRNA (guanine(46)-N(7))-methyltransferase</fullName>
    </alternativeName>
    <alternativeName>
        <fullName evidence="2">tRNA(m7G46)-methyltransferase</fullName>
    </alternativeName>
</protein>
<name>TRMB_PSEP1</name>
<dbReference type="EC" id="2.1.1.33" evidence="2"/>
<dbReference type="EMBL" id="CP000712">
    <property type="protein sequence ID" value="ABQ81096.1"/>
    <property type="molecule type" value="Genomic_DNA"/>
</dbReference>
<dbReference type="SMR" id="A5WAD6"/>
<dbReference type="KEGG" id="ppf:Pput_4976"/>
<dbReference type="eggNOG" id="COG0220">
    <property type="taxonomic scope" value="Bacteria"/>
</dbReference>
<dbReference type="HOGENOM" id="CLU_050910_0_1_6"/>
<dbReference type="UniPathway" id="UPA00989"/>
<dbReference type="GO" id="GO:0043527">
    <property type="term" value="C:tRNA methyltransferase complex"/>
    <property type="evidence" value="ECO:0007669"/>
    <property type="project" value="TreeGrafter"/>
</dbReference>
<dbReference type="GO" id="GO:0008176">
    <property type="term" value="F:tRNA (guanine(46)-N7)-methyltransferase activity"/>
    <property type="evidence" value="ECO:0007669"/>
    <property type="project" value="UniProtKB-UniRule"/>
</dbReference>
<dbReference type="CDD" id="cd02440">
    <property type="entry name" value="AdoMet_MTases"/>
    <property type="match status" value="1"/>
</dbReference>
<dbReference type="FunFam" id="3.40.50.150:FF:000035">
    <property type="entry name" value="tRNA (guanine-N(7)-)-methyltransferase"/>
    <property type="match status" value="1"/>
</dbReference>
<dbReference type="Gene3D" id="3.40.50.150">
    <property type="entry name" value="Vaccinia Virus protein VP39"/>
    <property type="match status" value="1"/>
</dbReference>
<dbReference type="HAMAP" id="MF_01057">
    <property type="entry name" value="tRNA_methyltr_TrmB"/>
    <property type="match status" value="1"/>
</dbReference>
<dbReference type="InterPro" id="IPR029063">
    <property type="entry name" value="SAM-dependent_MTases_sf"/>
</dbReference>
<dbReference type="InterPro" id="IPR003358">
    <property type="entry name" value="tRNA_(Gua-N-7)_MeTrfase_Trmb"/>
</dbReference>
<dbReference type="InterPro" id="IPR055361">
    <property type="entry name" value="tRNA_methyltr_TrmB_bact"/>
</dbReference>
<dbReference type="NCBIfam" id="TIGR00091">
    <property type="entry name" value="tRNA (guanosine(46)-N7)-methyltransferase TrmB"/>
    <property type="match status" value="1"/>
</dbReference>
<dbReference type="PANTHER" id="PTHR23417">
    <property type="entry name" value="3-DEOXY-D-MANNO-OCTULOSONIC-ACID TRANSFERASE/TRNA GUANINE-N 7 - -METHYLTRANSFERASE"/>
    <property type="match status" value="1"/>
</dbReference>
<dbReference type="PANTHER" id="PTHR23417:SF14">
    <property type="entry name" value="PENTACOTRIPEPTIDE-REPEAT REGION OF PRORP DOMAIN-CONTAINING PROTEIN"/>
    <property type="match status" value="1"/>
</dbReference>
<dbReference type="Pfam" id="PF02390">
    <property type="entry name" value="Methyltransf_4"/>
    <property type="match status" value="1"/>
</dbReference>
<dbReference type="SUPFAM" id="SSF53335">
    <property type="entry name" value="S-adenosyl-L-methionine-dependent methyltransferases"/>
    <property type="match status" value="1"/>
</dbReference>
<dbReference type="PROSITE" id="PS51625">
    <property type="entry name" value="SAM_MT_TRMB"/>
    <property type="match status" value="1"/>
</dbReference>
<organism>
    <name type="scientific">Pseudomonas putida (strain ATCC 700007 / DSM 6899 / JCM 31910 / BCRC 17059 / LMG 24140 / F1)</name>
    <dbReference type="NCBI Taxonomy" id="351746"/>
    <lineage>
        <taxon>Bacteria</taxon>
        <taxon>Pseudomonadati</taxon>
        <taxon>Pseudomonadota</taxon>
        <taxon>Gammaproteobacteria</taxon>
        <taxon>Pseudomonadales</taxon>
        <taxon>Pseudomonadaceae</taxon>
        <taxon>Pseudomonas</taxon>
    </lineage>
</organism>
<accession>A5WAD6</accession>
<proteinExistence type="inferred from homology"/>
<evidence type="ECO:0000250" key="1"/>
<evidence type="ECO:0000255" key="2">
    <source>
        <dbReference type="HAMAP-Rule" id="MF_01057"/>
    </source>
</evidence>
<evidence type="ECO:0000256" key="3">
    <source>
        <dbReference type="SAM" id="MobiDB-lite"/>
    </source>
</evidence>
<sequence length="240" mass="27193">MTESHDTPITSDGEARPHRRIKSFVMRAGRMTEGQQRGLDQGGPLYILPLADSPVDYDQVFGRSAPRTLEIGFGMGHSLLEMAAAAPEQDFIGVEVHRPGVGALLNGVLTQGLKNLRVYDCDAIEVLNRCVADNSLDRLMLFFPDPWHKARHHKRRIVQLEFAELVRRKLKPGGVFHMATDWEPYAEYMLEVMSAAPGYRNRAADGTYVPRPEERPITKFERRGERLGHGVWDLKFEKVD</sequence>
<keyword id="KW-0489">Methyltransferase</keyword>
<keyword id="KW-0949">S-adenosyl-L-methionine</keyword>
<keyword id="KW-0808">Transferase</keyword>
<keyword id="KW-0819">tRNA processing</keyword>
<gene>
    <name evidence="2" type="primary">trmB</name>
    <name type="ordered locus">Pput_4976</name>
</gene>
<feature type="chain" id="PRO_1000064405" description="tRNA (guanine-N(7)-)-methyltransferase">
    <location>
        <begin position="1"/>
        <end position="240"/>
    </location>
</feature>
<feature type="region of interest" description="Disordered" evidence="3">
    <location>
        <begin position="1"/>
        <end position="20"/>
    </location>
</feature>
<feature type="active site" evidence="1">
    <location>
        <position position="145"/>
    </location>
</feature>
<feature type="binding site" evidence="2">
    <location>
        <position position="70"/>
    </location>
    <ligand>
        <name>S-adenosyl-L-methionine</name>
        <dbReference type="ChEBI" id="CHEBI:59789"/>
    </ligand>
</feature>
<feature type="binding site" evidence="2">
    <location>
        <position position="95"/>
    </location>
    <ligand>
        <name>S-adenosyl-L-methionine</name>
        <dbReference type="ChEBI" id="CHEBI:59789"/>
    </ligand>
</feature>
<feature type="binding site" evidence="2">
    <location>
        <position position="122"/>
    </location>
    <ligand>
        <name>S-adenosyl-L-methionine</name>
        <dbReference type="ChEBI" id="CHEBI:59789"/>
    </ligand>
</feature>
<feature type="binding site" evidence="2">
    <location>
        <position position="145"/>
    </location>
    <ligand>
        <name>S-adenosyl-L-methionine</name>
        <dbReference type="ChEBI" id="CHEBI:59789"/>
    </ligand>
</feature>
<feature type="binding site" evidence="2">
    <location>
        <position position="149"/>
    </location>
    <ligand>
        <name>substrate</name>
    </ligand>
</feature>
<feature type="binding site" evidence="2">
    <location>
        <position position="181"/>
    </location>
    <ligand>
        <name>substrate</name>
    </ligand>
</feature>
<feature type="binding site" evidence="2">
    <location>
        <begin position="218"/>
        <end position="221"/>
    </location>
    <ligand>
        <name>substrate</name>
    </ligand>
</feature>